<accession>Q8V294</accession>
<accession>Q5IBC3</accession>
<accession>Q8UYH5</accession>
<accession>Q8V295</accession>
<organism>
    <name type="scientific">Venezuelan equine encephalitis virus</name>
    <name type="common">VEEV</name>
    <dbReference type="NCBI Taxonomy" id="11036"/>
    <lineage>
        <taxon>Viruses</taxon>
        <taxon>Riboviria</taxon>
        <taxon>Orthornavirae</taxon>
        <taxon>Kitrinoviricota</taxon>
        <taxon>Alsuviricetes</taxon>
        <taxon>Martellivirales</taxon>
        <taxon>Togaviridae</taxon>
        <taxon>Alphavirus</taxon>
    </lineage>
</organism>
<keyword id="KW-0067">ATP-binding</keyword>
<keyword id="KW-1262">Eukaryotic host gene expression shutoff by virus</keyword>
<keyword id="KW-1191">Eukaryotic host transcription shutoff by virus</keyword>
<keyword id="KW-0342">GTP-binding</keyword>
<keyword id="KW-0347">Helicase</keyword>
<keyword id="KW-1032">Host cell membrane</keyword>
<keyword id="KW-1034">Host cell projection</keyword>
<keyword id="KW-1035">Host cytoplasm</keyword>
<keyword id="KW-1036">Host cytoplasmic vesicle</keyword>
<keyword id="KW-1190">Host gene expression shutoff by virus</keyword>
<keyword id="KW-1043">Host membrane</keyword>
<keyword id="KW-1048">Host nucleus</keyword>
<keyword id="KW-0945">Host-virus interaction</keyword>
<keyword id="KW-0378">Hydrolase</keyword>
<keyword id="KW-1104">Inhibition of host RNA polymerase II by virus</keyword>
<keyword id="KW-0449">Lipoprotein</keyword>
<keyword id="KW-0472">Membrane</keyword>
<keyword id="KW-0479">Metal-binding</keyword>
<keyword id="KW-0489">Methyltransferase</keyword>
<keyword id="KW-0506">mRNA capping</keyword>
<keyword id="KW-0507">mRNA processing</keyword>
<keyword id="KW-0511">Multifunctional enzyme</keyword>
<keyword id="KW-0547">Nucleotide-binding</keyword>
<keyword id="KW-0548">Nucleotidyltransferase</keyword>
<keyword id="KW-0564">Palmitate</keyword>
<keyword id="KW-0645">Protease</keyword>
<keyword id="KW-0677">Repeat</keyword>
<keyword id="KW-1159">RNA suppression of termination</keyword>
<keyword id="KW-0694">RNA-binding</keyword>
<keyword id="KW-0696">RNA-directed RNA polymerase</keyword>
<keyword id="KW-0949">S-adenosyl-L-methionine</keyword>
<keyword id="KW-0788">Thiol protease</keyword>
<keyword id="KW-0808">Transferase</keyword>
<keyword id="KW-0832">Ubl conjugation</keyword>
<keyword id="KW-0693">Viral RNA replication</keyword>
<keyword id="KW-0862">Zinc</keyword>
<sequence length="2497" mass="278878">MEKVHVDIEEDSPFLRALQRSFPQFEVEAKQVTDNDHANARAFSHLASKLIETEVEPSDTILDIGSAPARRMYSKHKYHCICPMKCAEDPDRLFKYAAKLKKNCKDITDKELDKKMKELAEVMSDPDLETETICLHDDETCRFEGQVAVYQDVYAVDGPTSLYHQANKGVRVAYWIGFDTTPFMFKNLAGAYPSYSTNWADETVLTARNIGLCSSDVMERSRRGMSILRKKFLKPSNNVLFSVGSTIYHEKRDLLRSWHLPSVFHLRGKQNYTCRCETIVSCDGYVVKRIAISPGLYGKPSGYAATMHREGFLCCKVTDTLDGERVSFPVCTYVPATLCDQMTGILATDVSADDAQKLLVGLNQRIVVNGRTQRNTNTMKNYLLPVVAQAFARWAKEYKEDQEDERPLGLRDRQLVMGCCWAFRKHKITSVYKRPDTQTIIKVNSDFHSFVLPRIGSNTLEIGLRTRIRKLLEEPVDRPPLITADDIQEAKNAADEAKEVKEAEELRAALPPLSADVEEPALEADVDLMLQEAGAGSVETPRGLIKVTSYAGEDKIGSYAVLSPQAVLRSEKLTCIHPLAEQVIVITHSGRKGRYAVEPYHGKVVVPEGQAIPVQDFQALSESATIVYNEREFVNRYLHHIATHGGALNTDEEYYRVVKPSEHEGEYLYDIDKKQCVKKELVSGLGLTGELVDPPFHEFAYESLRTRPAAPYQVPTIGVYGVPGSGKSGIIKSAVTKKDLVVSAKKENCAEIIRDVKKMKGLDVNARTVDSVLLNGCKHPVETLYIDEAFACHAGTLRALIAIIRPKKAVLCGDPKQCGFFNMMCLKVHFNHEICTQVFHKSISRRCTKSVTSVVSTLFYDKRMRTTNPRDSKIEIDTTGSTKPKKDDLILTCFRGWVKQLQIDYKGNEIMTAAASQGLTRKGVYAVRYKVNENPLYAPTSEHVNVLLTRTEDKIVWKTLAGDPWIKTLTAKYPGDFTATMEEWQAEHDAIMRHILEKPDPTDVFQNKANVCWAKALVPVLKTAGIDLTTEQWNTVDYFKEDKAHSAEIVLNQLCVRFFGLDLDSGLFSAPTVPLSIRNNHWDNSPSPNMYGLNKEVVRQLSRRYPQLPRAVTTGRAYDMNTGTLRNYDPRINLVPVNRRLPHALVTQHADYPPSDFSAFVSKLKGRTVLVVGEKMSISGKTVDWLSETPDSTFRARLDLGIPSELPKYDIVFVNVRTQYRYHHYQQCEDHAIKLSMLTKKACLHLNPGGTCVSIGYGYADRASESIIGAVARQFKFSRVCKPKVSKEETEVLFVFIGFDRKTRTHNPYKLSSTLTNIYTGSRLHEAGCAPSYHVVRGDIATATEGVIVNAANSKGQPGSGVCGALYRKYPESFDLQPIEVGKARLVKGNSKHLIHAVGPNFNKVSEVEGDKQLAEAYESIARIINDNNYRSVAIPLLSTGIFAGNKDRLMQSLNHLLTALDTTDADVAIYCRDKKWEVTLKEVVARREAVEEICISEDSSVAEPDAELVRVHPKSSLAGRKGYSTSDGKTFSYLEGTKFHQAAKDMAEINAMWPAATEANEQVCLYILGESMSSIRSKCPVEESEASTPPSTLPCLCIHAMTPERVQRLKASRPEQITVCSSFPLPKYRITGVQKIQCSHPILFSPKVPEYIHPRKYLADAASANNEAAELTSVDVQPQLEESPENTEQLVEEEDSISVLSEAPHQVHQVEAEVHRFSASAQSSSWSIPRASDFDVESLSVLESLGANDTISMESSSNETALALRTIFRTPPIPRPRVQSTSTDVDSISALESCDSTSDARSVDSDETDVSIFDKRLEFMARPVPAPRTKFRTPPVPKPRARRPFHPLSSRSSSRSSLASNPPGVNRVITREEFEAFVAQQQXRFDAGAYIFSSDTGQGHLQQKSVRQTVLSEVVLERTELEISYAPRLDLNKEEILRKKLQLNPTQANRSRYQSRRVENMKAITTKRILQGLGHYLKSEGKVECYRTLHPVPLYSASVNRAFSSPKVAVEACNVVLKENFPTVASYCIIPEYDAYLDMVDGASCCLDTASFCPAKLRSFPKKHAYLEPTIRSAVPSAIQNTLQNVLAAATKRNCNVTQMRELPVLDSAAFNVECFKKYACNNEYWETYKKNPIRLTEENVVNYITKLKGPKAAALYAKTHNLDMLQDIPMDRFIMDLKRDVKVTPGTKHTEERPKVQVIQAADPLATAYLCGIHRELVRRLNAVLLPNIHTLFDMSAEDFDAIIAEHFQPGDWVLETDIASFDKSEDDAMALTALMILEDLGVDPELLTLIEAAFGEISSIHLPTKTKFRFGAMMKSGMFLTLFVNTVINMVIASRVLRERLTNSPCAAFIGDDNIVKGVKSDKLMADRCATWLNMEVKIIDAVVGEKAPYFCGGFILCDSVTGTACRVADPLKRLFKLGKPLAVDDEHDDDRRRALQEESARWNRVGIFSELCKAVESRYETVGTAVIIMAMTTLASSVESFSCLRGAPIALYG</sequence>
<dbReference type="EC" id="2.1.1.-" evidence="5"/>
<dbReference type="EC" id="2.7.7.-" evidence="5"/>
<dbReference type="EC" id="3.4.22.-" evidence="4"/>
<dbReference type="EC" id="3.6.1.15" evidence="6"/>
<dbReference type="EC" id="3.6.1.74" evidence="3"/>
<dbReference type="EC" id="3.6.4.13" evidence="6"/>
<dbReference type="EC" id="3.1.3.84" evidence="4"/>
<dbReference type="EC" id="2.7.7.19" evidence="2"/>
<dbReference type="EC" id="2.7.7.48" evidence="8"/>
<dbReference type="EMBL" id="AF448535">
    <property type="protein sequence ID" value="AAL47146.1"/>
    <property type="molecule type" value="Genomic_RNA"/>
</dbReference>
<dbReference type="EMBL" id="AF448536">
    <property type="protein sequence ID" value="AAL47148.1"/>
    <property type="molecule type" value="Genomic_RNA"/>
</dbReference>
<dbReference type="EMBL" id="AF448537">
    <property type="protein sequence ID" value="AAL47150.1"/>
    <property type="molecule type" value="Genomic_RNA"/>
</dbReference>
<dbReference type="EMBL" id="AF448538">
    <property type="protein sequence ID" value="AAL47152.1"/>
    <property type="molecule type" value="Genomic_RNA"/>
</dbReference>
<dbReference type="EMBL" id="AY823299">
    <property type="protein sequence ID" value="AAW30005.1"/>
    <property type="molecule type" value="Genomic_RNA"/>
</dbReference>
<dbReference type="MEROPS" id="C09.002"/>
<dbReference type="Proteomes" id="UP000106798">
    <property type="component" value="Genome"/>
</dbReference>
<dbReference type="Proteomes" id="UP000112737">
    <property type="component" value="Genome"/>
</dbReference>
<dbReference type="Proteomes" id="UP000142542">
    <property type="component" value="Genome"/>
</dbReference>
<dbReference type="Proteomes" id="UP000145658">
    <property type="component" value="Genome"/>
</dbReference>
<dbReference type="Proteomes" id="UP000166659">
    <property type="component" value="Genome"/>
</dbReference>
<dbReference type="GO" id="GO:0044162">
    <property type="term" value="C:host cell cytoplasmic vesicle membrane"/>
    <property type="evidence" value="ECO:0007669"/>
    <property type="project" value="UniProtKB-SubCell"/>
</dbReference>
<dbReference type="GO" id="GO:0044176">
    <property type="term" value="C:host cell filopodium"/>
    <property type="evidence" value="ECO:0007669"/>
    <property type="project" value="UniProtKB-SubCell"/>
</dbReference>
<dbReference type="GO" id="GO:0042025">
    <property type="term" value="C:host cell nucleus"/>
    <property type="evidence" value="ECO:0007669"/>
    <property type="project" value="UniProtKB-SubCell"/>
</dbReference>
<dbReference type="GO" id="GO:0020002">
    <property type="term" value="C:host cell plasma membrane"/>
    <property type="evidence" value="ECO:0007669"/>
    <property type="project" value="UniProtKB-SubCell"/>
</dbReference>
<dbReference type="GO" id="GO:0016020">
    <property type="term" value="C:membrane"/>
    <property type="evidence" value="ECO:0007669"/>
    <property type="project" value="UniProtKB-KW"/>
</dbReference>
<dbReference type="GO" id="GO:0005524">
    <property type="term" value="F:ATP binding"/>
    <property type="evidence" value="ECO:0007669"/>
    <property type="project" value="UniProtKB-KW"/>
</dbReference>
<dbReference type="GO" id="GO:0016887">
    <property type="term" value="F:ATP hydrolysis activity"/>
    <property type="evidence" value="ECO:0007669"/>
    <property type="project" value="RHEA"/>
</dbReference>
<dbReference type="GO" id="GO:0008234">
    <property type="term" value="F:cysteine-type peptidase activity"/>
    <property type="evidence" value="ECO:0007669"/>
    <property type="project" value="UniProtKB-KW"/>
</dbReference>
<dbReference type="GO" id="GO:0005525">
    <property type="term" value="F:GTP binding"/>
    <property type="evidence" value="ECO:0007669"/>
    <property type="project" value="UniProtKB-KW"/>
</dbReference>
<dbReference type="GO" id="GO:0046872">
    <property type="term" value="F:metal ion binding"/>
    <property type="evidence" value="ECO:0007669"/>
    <property type="project" value="UniProtKB-KW"/>
</dbReference>
<dbReference type="GO" id="GO:0140818">
    <property type="term" value="F:mRNA 5'-triphosphate monophosphatase activity"/>
    <property type="evidence" value="ECO:0007669"/>
    <property type="project" value="RHEA"/>
</dbReference>
<dbReference type="GO" id="GO:0008174">
    <property type="term" value="F:mRNA methyltransferase activity"/>
    <property type="evidence" value="ECO:0007669"/>
    <property type="project" value="InterPro"/>
</dbReference>
<dbReference type="GO" id="GO:1990817">
    <property type="term" value="F:poly(A) RNA polymerase activity"/>
    <property type="evidence" value="ECO:0007669"/>
    <property type="project" value="UniProtKB-EC"/>
</dbReference>
<dbReference type="GO" id="GO:0004651">
    <property type="term" value="F:polynucleotide 5'-phosphatase activity"/>
    <property type="evidence" value="ECO:0007669"/>
    <property type="project" value="UniProtKB-EC"/>
</dbReference>
<dbReference type="GO" id="GO:0003723">
    <property type="term" value="F:RNA binding"/>
    <property type="evidence" value="ECO:0007669"/>
    <property type="project" value="UniProtKB-KW"/>
</dbReference>
<dbReference type="GO" id="GO:0003724">
    <property type="term" value="F:RNA helicase activity"/>
    <property type="evidence" value="ECO:0007669"/>
    <property type="project" value="UniProtKB-EC"/>
</dbReference>
<dbReference type="GO" id="GO:0003968">
    <property type="term" value="F:RNA-directed RNA polymerase activity"/>
    <property type="evidence" value="ECO:0007669"/>
    <property type="project" value="UniProtKB-KW"/>
</dbReference>
<dbReference type="GO" id="GO:0006370">
    <property type="term" value="P:7-methylguanosine mRNA capping"/>
    <property type="evidence" value="ECO:0007669"/>
    <property type="project" value="UniProtKB-KW"/>
</dbReference>
<dbReference type="GO" id="GO:0006351">
    <property type="term" value="P:DNA-templated transcription"/>
    <property type="evidence" value="ECO:0007669"/>
    <property type="project" value="InterPro"/>
</dbReference>
<dbReference type="GO" id="GO:0032259">
    <property type="term" value="P:methylation"/>
    <property type="evidence" value="ECO:0007669"/>
    <property type="project" value="UniProtKB-KW"/>
</dbReference>
<dbReference type="GO" id="GO:0016556">
    <property type="term" value="P:mRNA modification"/>
    <property type="evidence" value="ECO:0007669"/>
    <property type="project" value="InterPro"/>
</dbReference>
<dbReference type="GO" id="GO:0006508">
    <property type="term" value="P:proteolysis"/>
    <property type="evidence" value="ECO:0007669"/>
    <property type="project" value="UniProtKB-KW"/>
</dbReference>
<dbReference type="GO" id="GO:0039657">
    <property type="term" value="P:symbiont-mediated suppression of host gene expression"/>
    <property type="evidence" value="ECO:0007669"/>
    <property type="project" value="UniProtKB-KW"/>
</dbReference>
<dbReference type="GO" id="GO:0039523">
    <property type="term" value="P:symbiont-mediated suppression of host mRNA transcription via inhibition of RNA polymerase II activity"/>
    <property type="evidence" value="ECO:0007669"/>
    <property type="project" value="UniProtKB-KW"/>
</dbReference>
<dbReference type="GO" id="GO:0039694">
    <property type="term" value="P:viral RNA genome replication"/>
    <property type="evidence" value="ECO:0007669"/>
    <property type="project" value="InterPro"/>
</dbReference>
<dbReference type="CDD" id="cd21557">
    <property type="entry name" value="Macro_X_Nsp3-like"/>
    <property type="match status" value="1"/>
</dbReference>
<dbReference type="CDD" id="cd23250">
    <property type="entry name" value="Togaviridae_RdRp"/>
    <property type="match status" value="1"/>
</dbReference>
<dbReference type="FunFam" id="3.40.220.10:FF:000015">
    <property type="entry name" value="Polyprotein P1234"/>
    <property type="match status" value="1"/>
</dbReference>
<dbReference type="FunFam" id="3.40.50.300:FF:001403">
    <property type="entry name" value="Polyprotein P1234"/>
    <property type="match status" value="1"/>
</dbReference>
<dbReference type="FunFam" id="3.40.50.300:FF:001415">
    <property type="entry name" value="Polyprotein P1234"/>
    <property type="match status" value="1"/>
</dbReference>
<dbReference type="Gene3D" id="3.90.70.110">
    <property type="entry name" value="Alphavirus nsP2 protease domain"/>
    <property type="match status" value="1"/>
</dbReference>
<dbReference type="Gene3D" id="3.40.220.10">
    <property type="entry name" value="Leucine Aminopeptidase, subunit E, domain 1"/>
    <property type="match status" value="1"/>
</dbReference>
<dbReference type="Gene3D" id="3.40.50.300">
    <property type="entry name" value="P-loop containing nucleotide triphosphate hydrolases"/>
    <property type="match status" value="2"/>
</dbReference>
<dbReference type="Gene3D" id="3.40.50.150">
    <property type="entry name" value="Vaccinia Virus protein VP39"/>
    <property type="match status" value="1"/>
</dbReference>
<dbReference type="InterPro" id="IPR027351">
    <property type="entry name" value="(+)RNA_virus_helicase_core_dom"/>
</dbReference>
<dbReference type="InterPro" id="IPR002588">
    <property type="entry name" value="Alphavirus-like_MT_dom"/>
</dbReference>
<dbReference type="InterPro" id="IPR002620">
    <property type="entry name" value="Alphavirus_nsp2pro"/>
</dbReference>
<dbReference type="InterPro" id="IPR044936">
    <property type="entry name" value="Alphavirus_nsp2pro_sf"/>
</dbReference>
<dbReference type="InterPro" id="IPR043502">
    <property type="entry name" value="DNA/RNA_pol_sf"/>
</dbReference>
<dbReference type="InterPro" id="IPR002589">
    <property type="entry name" value="Macro_dom"/>
</dbReference>
<dbReference type="InterPro" id="IPR043472">
    <property type="entry name" value="Macro_dom-like"/>
</dbReference>
<dbReference type="InterPro" id="IPR044371">
    <property type="entry name" value="Macro_X_NSP3-like"/>
</dbReference>
<dbReference type="InterPro" id="IPR048891">
    <property type="entry name" value="nsP3_ZBD"/>
</dbReference>
<dbReference type="InterPro" id="IPR027417">
    <property type="entry name" value="P-loop_NTPase"/>
</dbReference>
<dbReference type="InterPro" id="IPR001788">
    <property type="entry name" value="RNA-dep_RNA_pol_alsuvir"/>
</dbReference>
<dbReference type="InterPro" id="IPR007094">
    <property type="entry name" value="RNA-dir_pol_PSvirus"/>
</dbReference>
<dbReference type="InterPro" id="IPR029063">
    <property type="entry name" value="SAM-dependent_MTases_sf"/>
</dbReference>
<dbReference type="InterPro" id="IPR047311">
    <property type="entry name" value="Togaviridae_RdRp"/>
</dbReference>
<dbReference type="InterPro" id="IPR049329">
    <property type="entry name" value="ToMV_Hel_N"/>
</dbReference>
<dbReference type="PANTHER" id="PTHR11106">
    <property type="entry name" value="GANGLIOSIDE INDUCED DIFFERENTIATION ASSOCIATED PROTEIN 2-RELATED"/>
    <property type="match status" value="1"/>
</dbReference>
<dbReference type="PANTHER" id="PTHR11106:SF27">
    <property type="entry name" value="MACRO DOMAIN-CONTAINING PROTEIN"/>
    <property type="match status" value="1"/>
</dbReference>
<dbReference type="Pfam" id="PF01661">
    <property type="entry name" value="Macro"/>
    <property type="match status" value="1"/>
</dbReference>
<dbReference type="Pfam" id="PF20852">
    <property type="entry name" value="nsP3_ZBD"/>
    <property type="match status" value="1"/>
</dbReference>
<dbReference type="Pfam" id="PF01707">
    <property type="entry name" value="Peptidase_C9"/>
    <property type="match status" value="1"/>
</dbReference>
<dbReference type="Pfam" id="PF00978">
    <property type="entry name" value="RdRP_2"/>
    <property type="match status" value="1"/>
</dbReference>
<dbReference type="Pfam" id="PF20896">
    <property type="entry name" value="ToMV_Hel_N"/>
    <property type="match status" value="1"/>
</dbReference>
<dbReference type="Pfam" id="PF01443">
    <property type="entry name" value="Viral_helicase1"/>
    <property type="match status" value="1"/>
</dbReference>
<dbReference type="Pfam" id="PF01660">
    <property type="entry name" value="Vmethyltransf"/>
    <property type="match status" value="1"/>
</dbReference>
<dbReference type="SMART" id="SM00506">
    <property type="entry name" value="A1pp"/>
    <property type="match status" value="1"/>
</dbReference>
<dbReference type="SUPFAM" id="SSF56672">
    <property type="entry name" value="DNA/RNA polymerases"/>
    <property type="match status" value="1"/>
</dbReference>
<dbReference type="SUPFAM" id="SSF52949">
    <property type="entry name" value="Macro domain-like"/>
    <property type="match status" value="1"/>
</dbReference>
<dbReference type="SUPFAM" id="SSF52540">
    <property type="entry name" value="P-loop containing nucleoside triphosphate hydrolases"/>
    <property type="match status" value="1"/>
</dbReference>
<dbReference type="PROSITE" id="PS51743">
    <property type="entry name" value="ALPHAVIRUS_MT"/>
    <property type="match status" value="1"/>
</dbReference>
<dbReference type="PROSITE" id="PS51154">
    <property type="entry name" value="MACRO"/>
    <property type="match status" value="1"/>
</dbReference>
<dbReference type="PROSITE" id="PS51520">
    <property type="entry name" value="NSP2PRO"/>
    <property type="match status" value="1"/>
</dbReference>
<dbReference type="PROSITE" id="PS51657">
    <property type="entry name" value="PSRV_HELICASE"/>
    <property type="match status" value="1"/>
</dbReference>
<dbReference type="PROSITE" id="PS50507">
    <property type="entry name" value="RDRP_SSRNA_POS"/>
    <property type="match status" value="1"/>
</dbReference>
<name>POLN_EEVV</name>
<comment type="function">
    <molecule>Polyprotein P1234</molecule>
    <text evidence="6">Inactive precursor of the viral replicase, which is activated by cleavages carried out by the viral protease nsP2.</text>
</comment>
<comment type="function">
    <molecule>Polyprotein P123</molecule>
    <text evidence="2 13">The early replication complex formed by the polyprotein P123 and nsP4 synthesizes the minus-strand RNAs (antigenome) (By similarity). Polyprotein P123 is a short-lived polyprotein that accumulates during early stage of infection (Probable). As soon P123 is cleaved into mature proteins, the plus-strand RNAs synthesis begins (By similarity).</text>
</comment>
<comment type="function">
    <molecule>Polyprotein P123'</molecule>
    <text evidence="13">The early replication complex formed by the polyprotein P123' and nsP4 synthesizes minus-strand RNAs (antigenome) (Probable). Polyprotein P123' is a short-lived polyprotein that accumulates during early stage of infection (Probable). As soon P123' is cleaved into mature proteins, the plus-strand RNAs synthesis begins (Probable).</text>
</comment>
<comment type="function">
    <molecule>mRNA-capping enzyme nsP1</molecule>
    <text evidence="2 3 4 6 13">Cytoplasmic capping enzyme that catalyzes two virus-specific reactions: methyltransferase and nsP1 guanylyltransferase (By similarity). mRNA-capping is necessary since all viral RNAs are synthesized in the cytoplasm, and host capping enzymes are restricted to the nucleus (Probable). The enzymatic reaction involves a covalent link between 7-methyl-GMP and nsP1, whereas eukaryotic capping enzymes form a covalent complex only with GMP (Probable). NsP1 capping consists in the following reactions: GTP is first methylated into 7-methyl-GMP and then is covalently linked to nsP1 to form the m7GMp-nsP1 complex from which 7-methyl-GMP complex is transferred to the mRNA to create the cap structure (By similarity). NsP1 is also needed for the initiation of the minus-strand RNAs synthesis (By similarity). Probably serves as a membrane anchor for the replication complex composed of nsP1-nsP4 (By similarity). Nsp1 is needed for the initiation of the minus-strand RNAs synthesis (By similarity). Palmitoylated nsP1 is remodeling host cell cytoskeleton, and induces filopodium-like structure formation at the surface of the host cell (By similarity).</text>
</comment>
<comment type="function">
    <molecule>Protease nsP2</molecule>
    <text evidence="2 3 4 6">Multifunctional protein whose N-terminus is part of the RNA polymerase complex and displays NTPase, RNA triphosphatase and helicase activities (By similarity). NTPase and RNA triphosphatase are involved in viral RNA capping and helicase keeps a check on the dsRNA replication intermediates (By similarity). The C-terminus harbors a protease that specifically cleaves the polyproteins and releases the mature proteins (By similarity). Required for the shutoff of minus-strand RNAs synthesis (By similarity). Inhibits host translation to ensure maximal viral gene expression and evade host immune response (By similarity).</text>
</comment>
<comment type="function">
    <molecule>Non-structural protein 3</molecule>
    <text evidence="2 4">Seems to be essential for minus-strand RNAs and subgenomic 26S mRNAs synthesis (By similarity). Displays mono-ADP-ribosylhydrolase activity (By similarity). ADP-ribosylation is a post-translational modification that controls various processes of the host cell and the virus probably needs to revert it for optimal viral replication (By similarity). Binds proteins of FXR family and sequesters them into the viral RNA replication complexes thereby inhibiting the formation of host stress granules on viral mRNAs (By similarity). The nsp3-FXR complexes bind viral RNAs and probably orchestrate the assembly of viral replication complexes, thanks to the ability of FXR family members to self-assemble and bind DNA (By similarity).</text>
</comment>
<comment type="function">
    <molecule>Non-structural protein 3'</molecule>
    <text evidence="2 13">Seems to be essential for minus-strand RNAs and subgenomic 26S mRNAs synthesis (By similarity). Displays mono-ADP-ribosylhydrolase activity (Probable). ADP-ribosylation is a post-translational modification that controls various processes of the host cell and the virus probably needs to revert it for optimal viral replication (Probable). Binds proteins of FXR family and sequesters them into the viral RNA replication complexes thereby inhibiting the formation of host stress granules on viral mRNAs (Probable). The nsp3'-FXR complexes bind viral RNAs and probably orchestrate the assembly of viral replication complexes, thanks to the ability of FXR family members to self-assemble and bind DNA (Probable).</text>
</comment>
<comment type="function">
    <molecule>RNA-directed RNA polymerase nsP4</molecule>
    <text evidence="2">RNA dependent RNA polymerase (By similarity). Replicates genomic and antigenomic RNA by recognizing replications specific signals. The early replication complex formed by the polyprotein P123 and nsP4 synthesizes minus-strand RNAs (By similarity). The late replication complex composed of fully processed nsP1-nsP4 is responsible for the production of genomic and subgenomic plus-strand RNAs (By similarity).</text>
</comment>
<comment type="catalytic activity">
    <reaction evidence="4">
        <text>GTP + S-adenosyl-L-methionine = N(7)-methyl-GTP + S-adenosyl-L-homocysteine</text>
        <dbReference type="Rhea" id="RHEA:46948"/>
        <dbReference type="ChEBI" id="CHEBI:37565"/>
        <dbReference type="ChEBI" id="CHEBI:57856"/>
        <dbReference type="ChEBI" id="CHEBI:59789"/>
        <dbReference type="ChEBI" id="CHEBI:87133"/>
    </reaction>
</comment>
<comment type="catalytic activity">
    <reaction evidence="4">
        <text>N(7)-methyl-GTP + L-histidyl-[protein] = N(tele)-(N(7)-methylguanosine 5'-phospho)-L-histidyl-[protein] + diphosphate</text>
        <dbReference type="Rhea" id="RHEA:54792"/>
        <dbReference type="Rhea" id="RHEA-COMP:9745"/>
        <dbReference type="Rhea" id="RHEA-COMP:13995"/>
        <dbReference type="ChEBI" id="CHEBI:29979"/>
        <dbReference type="ChEBI" id="CHEBI:33019"/>
        <dbReference type="ChEBI" id="CHEBI:87133"/>
        <dbReference type="ChEBI" id="CHEBI:138334"/>
    </reaction>
    <physiologicalReaction direction="left-to-right" evidence="4">
        <dbReference type="Rhea" id="RHEA:54793"/>
    </physiologicalReaction>
</comment>
<comment type="catalytic activity">
    <reaction evidence="4">
        <text>N(tele)-(N(7)-methylguanosine 5'-phospho)-L-histidyl-[protein] + a 5'-end diphospho-(purine-ribonucleoside) in mRNA + H(+) = a 5'-end (N(7)-methyl 5'-triphosphoguanosine)-(purine-ribonucleoside) in mRNA + L-histidyl-[protein]</text>
        <dbReference type="Rhea" id="RHEA:54800"/>
        <dbReference type="Rhea" id="RHEA-COMP:9745"/>
        <dbReference type="Rhea" id="RHEA-COMP:12925"/>
        <dbReference type="Rhea" id="RHEA-COMP:13929"/>
        <dbReference type="Rhea" id="RHEA-COMP:13995"/>
        <dbReference type="ChEBI" id="CHEBI:15378"/>
        <dbReference type="ChEBI" id="CHEBI:29979"/>
        <dbReference type="ChEBI" id="CHEBI:133968"/>
        <dbReference type="ChEBI" id="CHEBI:138276"/>
        <dbReference type="ChEBI" id="CHEBI:138334"/>
    </reaction>
</comment>
<comment type="catalytic activity">
    <reaction evidence="3">
        <text>a 5'-end triphospho-ribonucleoside in mRNA + H2O = a 5'-end diphospho-ribonucleoside in mRNA + phosphate + H(+)</text>
        <dbReference type="Rhea" id="RHEA:67004"/>
        <dbReference type="Rhea" id="RHEA-COMP:17164"/>
        <dbReference type="Rhea" id="RHEA-COMP:17165"/>
        <dbReference type="ChEBI" id="CHEBI:15377"/>
        <dbReference type="ChEBI" id="CHEBI:15378"/>
        <dbReference type="ChEBI" id="CHEBI:43474"/>
        <dbReference type="ChEBI" id="CHEBI:167616"/>
        <dbReference type="ChEBI" id="CHEBI:167618"/>
        <dbReference type="EC" id="3.6.1.74"/>
    </reaction>
    <physiologicalReaction direction="left-to-right" evidence="3">
        <dbReference type="Rhea" id="RHEA:67005"/>
    </physiologicalReaction>
</comment>
<comment type="catalytic activity">
    <reaction evidence="6">
        <text>a ribonucleoside 5'-triphosphate + H2O = a ribonucleoside 5'-diphosphate + phosphate + H(+)</text>
        <dbReference type="Rhea" id="RHEA:23680"/>
        <dbReference type="ChEBI" id="CHEBI:15377"/>
        <dbReference type="ChEBI" id="CHEBI:15378"/>
        <dbReference type="ChEBI" id="CHEBI:43474"/>
        <dbReference type="ChEBI" id="CHEBI:57930"/>
        <dbReference type="ChEBI" id="CHEBI:61557"/>
        <dbReference type="EC" id="3.6.1.15"/>
    </reaction>
</comment>
<comment type="catalytic activity">
    <reaction evidence="6">
        <text>ATP + H2O = ADP + phosphate + H(+)</text>
        <dbReference type="Rhea" id="RHEA:13065"/>
        <dbReference type="ChEBI" id="CHEBI:15377"/>
        <dbReference type="ChEBI" id="CHEBI:15378"/>
        <dbReference type="ChEBI" id="CHEBI:30616"/>
        <dbReference type="ChEBI" id="CHEBI:43474"/>
        <dbReference type="ChEBI" id="CHEBI:456216"/>
        <dbReference type="EC" id="3.6.4.13"/>
    </reaction>
</comment>
<comment type="catalytic activity">
    <reaction evidence="8">
        <text>RNA(n) + a ribonucleoside 5'-triphosphate = RNA(n+1) + diphosphate</text>
        <dbReference type="Rhea" id="RHEA:21248"/>
        <dbReference type="Rhea" id="RHEA-COMP:14527"/>
        <dbReference type="Rhea" id="RHEA-COMP:17342"/>
        <dbReference type="ChEBI" id="CHEBI:33019"/>
        <dbReference type="ChEBI" id="CHEBI:61557"/>
        <dbReference type="ChEBI" id="CHEBI:140395"/>
        <dbReference type="EC" id="2.7.7.48"/>
    </reaction>
</comment>
<comment type="catalytic activity">
    <reaction evidence="4">
        <text>4-O-(ADP-D-ribosyl)-L-aspartyl-[protein] + H2O = L-aspartyl-[protein] + ADP-D-ribose + H(+)</text>
        <dbReference type="Rhea" id="RHEA:54428"/>
        <dbReference type="Rhea" id="RHEA-COMP:9867"/>
        <dbReference type="Rhea" id="RHEA-COMP:13832"/>
        <dbReference type="ChEBI" id="CHEBI:15377"/>
        <dbReference type="ChEBI" id="CHEBI:15378"/>
        <dbReference type="ChEBI" id="CHEBI:29961"/>
        <dbReference type="ChEBI" id="CHEBI:57967"/>
        <dbReference type="ChEBI" id="CHEBI:138102"/>
    </reaction>
    <physiologicalReaction direction="left-to-right" evidence="4">
        <dbReference type="Rhea" id="RHEA:54429"/>
    </physiologicalReaction>
</comment>
<comment type="catalytic activity">
    <reaction evidence="4">
        <text>5-O-(ADP-D-ribosyl)-L-glutamyl-[protein] + H2O = L-glutamyl-[protein] + ADP-D-ribose + H(+)</text>
        <dbReference type="Rhea" id="RHEA:58248"/>
        <dbReference type="Rhea" id="RHEA-COMP:10208"/>
        <dbReference type="Rhea" id="RHEA-COMP:15089"/>
        <dbReference type="ChEBI" id="CHEBI:15377"/>
        <dbReference type="ChEBI" id="CHEBI:15378"/>
        <dbReference type="ChEBI" id="CHEBI:29973"/>
        <dbReference type="ChEBI" id="CHEBI:57967"/>
        <dbReference type="ChEBI" id="CHEBI:142540"/>
    </reaction>
    <physiologicalReaction direction="left-to-right" evidence="4">
        <dbReference type="Rhea" id="RHEA:58249"/>
    </physiologicalReaction>
</comment>
<comment type="catalytic activity">
    <reaction evidence="2">
        <text>RNA(n) + ATP = RNA(n)-3'-adenine ribonucleotide + diphosphate</text>
        <dbReference type="Rhea" id="RHEA:11332"/>
        <dbReference type="Rhea" id="RHEA-COMP:14527"/>
        <dbReference type="Rhea" id="RHEA-COMP:17347"/>
        <dbReference type="ChEBI" id="CHEBI:30616"/>
        <dbReference type="ChEBI" id="CHEBI:33019"/>
        <dbReference type="ChEBI" id="CHEBI:140395"/>
        <dbReference type="ChEBI" id="CHEBI:173115"/>
        <dbReference type="EC" id="2.7.7.19"/>
    </reaction>
</comment>
<comment type="catalytic activity">
    <reaction evidence="5">
        <text>ADP-alpha-D-ribose 1''-phosphate + H2O = ADP-D-ribose + phosphate</text>
        <dbReference type="Rhea" id="RHEA:25029"/>
        <dbReference type="ChEBI" id="CHEBI:15377"/>
        <dbReference type="ChEBI" id="CHEBI:43474"/>
        <dbReference type="ChEBI" id="CHEBI:57967"/>
        <dbReference type="ChEBI" id="CHEBI:58753"/>
        <dbReference type="EC" id="3.1.3.84"/>
    </reaction>
    <physiologicalReaction direction="left-to-right" evidence="5">
        <dbReference type="Rhea" id="RHEA:25030"/>
    </physiologicalReaction>
</comment>
<comment type="cofactor">
    <cofactor evidence="2">
        <name>Mg(2+)</name>
        <dbReference type="ChEBI" id="CHEBI:18420"/>
    </cofactor>
    <cofactor evidence="2">
        <name>Mn(2+)</name>
        <dbReference type="ChEBI" id="CHEBI:29035"/>
    </cofactor>
    <text evidence="2">For nsP4 adenylyltransferase activity; Mn(2+) supports catalysis at 60% of the levels observed with Mg(2+).</text>
</comment>
<comment type="cofactor">
    <cofactor evidence="2">
        <name>Mg(2+)</name>
        <dbReference type="ChEBI" id="CHEBI:18420"/>
    </cofactor>
    <text evidence="2">For nsP4 RNA-directed RNA polymerase activity.</text>
</comment>
<comment type="cofactor">
    <cofactor evidence="4">
        <name>Mg(2+)</name>
        <dbReference type="ChEBI" id="CHEBI:18420"/>
    </cofactor>
    <text evidence="4">For nsP1 guanylylation.</text>
</comment>
<comment type="cofactor">
    <cofactor>
        <name>Mg(2+)</name>
        <dbReference type="ChEBI" id="CHEBI:18420"/>
    </cofactor>
    <text evidence="6">For nsP2 RNA triphosphatase activity.</text>
</comment>
<comment type="cofactor">
    <cofactor>
        <name>Mg(2+)</name>
        <dbReference type="ChEBI" id="CHEBI:18420"/>
    </cofactor>
    <text evidence="6">For nsP2 NTPase activity.</text>
</comment>
<comment type="activity regulation">
    <molecule>mRNA-capping enzyme nsP1</molecule>
    <text evidence="4">Inhibited by sinefungin.</text>
</comment>
<comment type="subunit">
    <molecule>mRNA-capping enzyme nsP1</molecule>
    <text evidence="4 6">Interacts with non-structural protein 3 (By similarity). Interacts with RNA-directed RNA polymerase nsP4 (By similarity). Interacts with protease nsP2 (By similarity). interacts with itself (By similarity).</text>
</comment>
<comment type="subunit">
    <molecule>Non-structural protein 3</molecule>
    <text evidence="4 6">Interacts with mRNA-capping enzyme nsP1 (By similarity). Interacts with host DDX1 (By similarity). Interacts with host DDX3 (By similarity). Interacts (via C-terminus) with host FXR1; this interaction inhibits the formation of host stress granules on viral mRNAs and the nsp3-FXR1 complexes bind viral RNAs and probably orchestrate the assembly of viral replication complexes (By similarity). Interacts (via C-terminus) with host FXR2; this interaction inhibits the formation of host stress granules on viral mRNAs and the nsp3-FXR2 complexes bind viral RNAs and probably orchestrate the assembly of viral replication complexes (By similarity). Interacts (via C-terminus) with host FMR1; this interaction inhibits the formation of host stress granules on viral mRNAs and the nsp3-FMR1 complexes bind viral RNAs and probably orchestrate the assembly of viral replication complexes (By similarity).</text>
</comment>
<comment type="subunit">
    <molecule>RNA-directed RNA polymerase nsP4</molecule>
    <text evidence="4 6">Interacts with mRNA-capping enzyme nsP1 (By similarity). Interacts with protease nsP2 (By similarity). interacts with itself (By similarity).</text>
</comment>
<comment type="subunit">
    <molecule>Protease nsP2</molecule>
    <text evidence="4 6">Interacts with RNA-directed RNA polymerase nsP4 (By similarity). Interacts with mRNA-capping enzyme nsP1 (By similarity). Interacts with KPNA1/karyopherin-alpha1; this interaction probably allows the active transport of protease nsP2 into the host nucleus (By similarity).</text>
</comment>
<comment type="subcellular location">
    <molecule>Polyprotein P1234</molecule>
    <subcellularLocation>
        <location evidence="13">Host cytoplasmic vesicle membrane</location>
        <topology evidence="13">Peripheral membrane protein</topology>
    </subcellularLocation>
    <text evidence="13">Part of cytoplasmic vesicles, which are probably formed at the plasma membrane and internalized leading to late endosomal/lysosomal spherules containing the replication complex.</text>
</comment>
<comment type="subcellular location">
    <molecule>Polyprotein P123'</molecule>
    <subcellularLocation>
        <location evidence="13">Host cytoplasmic vesicle membrane</location>
        <topology evidence="13">Peripheral membrane protein</topology>
    </subcellularLocation>
    <text evidence="13">Part of cytoplasmic vesicles, which are probably formed at the plasma membrane and internalized leading to late endosomal/lysosomal spherules containing the replication complex.</text>
</comment>
<comment type="subcellular location">
    <molecule>Polyprotein P123</molecule>
    <subcellularLocation>
        <location evidence="13">Host cytoplasmic vesicle membrane</location>
        <topology evidence="13">Peripheral membrane protein</topology>
    </subcellularLocation>
    <text evidence="13">Part of cytoplasmic vesicles, which are probably formed at the plasma membrane and internalized leading to late endosomal/lysosomal spherules containing the replication complex.</text>
</comment>
<comment type="subcellular location">
    <molecule>mRNA-capping enzyme nsP1</molecule>
    <subcellularLocation>
        <location evidence="3">Host cytoplasmic vesicle membrane</location>
        <topology evidence="3">Lipid-anchor</topology>
    </subcellularLocation>
    <subcellularLocation>
        <location evidence="3">Host cell membrane</location>
        <topology evidence="3">Lipid-anchor</topology>
        <orientation evidence="3">Cytoplasmic side</orientation>
    </subcellularLocation>
    <subcellularLocation>
        <location evidence="3">Host cell projection</location>
        <location evidence="3">Host filopodium</location>
    </subcellularLocation>
    <text evidence="3">In the late phase of infection, the polyprotein is quickly cleaved before localization to cellular membranes. Then a fraction of nsP1 localizes to the inner surface of the plasma membrane and its filopodial extensions. Only the palmitoylated nsP1 localizes to the host filopodia (By similarity). NsP1 is also part of cytoplasmic vesicles, which are probably formed at the plasma membrane and internalized leading to late endosomal/lysosomal spherules containing the replication complex (By similarity).</text>
</comment>
<comment type="subcellular location">
    <molecule>Protease nsP2</molecule>
    <subcellularLocation>
        <location evidence="3">Host cytoplasmic vesicle membrane</location>
        <topology evidence="3">Peripheral membrane protein</topology>
    </subcellularLocation>
    <subcellularLocation>
        <location evidence="4">Host nucleus</location>
    </subcellularLocation>
    <subcellularLocation>
        <location evidence="4">Host cytoplasm</location>
    </subcellularLocation>
    <text evidence="3 4">In the late phase of infection, the polyprotein is quickly cleaved before localization to cellular membranes. Then approximately half of nsP2 is found in the nucleus (By similarity). Shuttles between cytoplasm and nucleus (By similarity). NsP2 is also part of cytoplasmic vesicles, which are probably formed at the plasma membrane and internalized leading to late endosomal/lysosomal spherules containing the replication complex (By similarity).</text>
</comment>
<comment type="subcellular location">
    <molecule>Non-structural protein 3</molecule>
    <subcellularLocation>
        <location evidence="2">Host cytoplasmic vesicle membrane</location>
        <topology evidence="13">Peripheral membrane protein</topology>
    </subcellularLocation>
    <text evidence="2">In the late phase of infection, the polyprotein is quickly cleaved before localization to cellular membranes. Then nsP3 and nsP3' form aggregates in cytoplasm (By similarity). NsP3 is also part of cytoplasmic vesicles, which are probably formed at the plasma membrane and internalized leading to late endosomal/lysosomal spherules containing the replication complex (By similarity).</text>
</comment>
<comment type="subcellular location">
    <molecule>Non-structural protein 3'</molecule>
    <subcellularLocation>
        <location evidence="13">Host cytoplasmic vesicle membrane</location>
        <topology evidence="13">Peripheral membrane protein</topology>
    </subcellularLocation>
    <text evidence="2 13">In the late phase of infection, the polyprotein is quickly cleaved before localization to cellular membranes. Then nsP3 and nsP3' form aggregates in cytoplasm (By similarity). NsP3' is also part of cytoplasmic vesicles, which are probably formed at the plasma membrane and internalized leading to late endosomal/lysosomal spherules containing the replication complex (Probable).</text>
</comment>
<comment type="subcellular location">
    <molecule>RNA-directed RNA polymerase nsP4</molecule>
    <subcellularLocation>
        <location>Host cytoplasmic vesicle membrane</location>
        <topology evidence="3">Peripheral membrane protein</topology>
    </subcellularLocation>
    <text evidence="3">NsP4 is part of cytoplasmic vesicles, which are probably formed at the plasma membrane and internalized leading to late endosomal/lysosomal spherules containing the replication complex.</text>
</comment>
<comment type="domain">
    <molecule>Protease nsP2</molecule>
    <text evidence="4 6">The N-terminus exhibits NTPase and RNA triphosphatase activities and is proposed to have helicase activity, whereas the C-terminus possesses protease activity (By similarity). Contains a nuclear localization signal and a nuclear export signal, these two motifs are probably involved in the shuttling between the cytoplasm and the nucleus of nsP2 (By similarity).</text>
</comment>
<comment type="domain">
    <molecule>Non-structural protein 3</molecule>
    <text evidence="2 4">In the N-terminus, the macro domain displays a mono-ADP-ribosylhydrolase activity (By similarity). The central part has a zinc-binding function (By similarity). The C-terminus contains two approximate repeats necessary and sufficient for formation of the nsP3/FXR complex (By similarity).</text>
</comment>
<comment type="domain">
    <molecule>Non-structural protein 3'</molecule>
    <text evidence="2 4">In the N-terminus, the macro domain displays a mono-ADP-ribosylhydrolase activity (By similarity). The central part has a zinc-binding function (By similarity). The C-terminus contains two approximate repeats necessary and sufficient for formation of the nsP3'/FXR complex (By similarity).</text>
</comment>
<comment type="PTM">
    <molecule>Polyprotein P1234</molecule>
    <text evidence="2">Specific enzymatic cleavages in vivo yield mature proteins (By similarity). The processing of the polyprotein is temporally regulated (By similarity). In early stages (1.7 hpi), P1234 is first cleaved in trans through its nsP2 protease activity, releasing P123' and nsP4, which associate to form the early replication complex (By similarity). At the same time, P1234 is also cut at the nsP1/nsP2 site early in infection but with lower efficiency (By similarity). After replication of the viral minus-strand RNAs (4 hpi), the polyproteins are cut at the nsP1/nsP2 and nsP2/nsP3 sites very efficiently, preventing accumulation of P123' and P1234 and allowing the formation of the late replication complex (By similarity). NsP3'/nsP4 site is not cleaved anymore and P34 is produced rather than nsP4 (By similarity).</text>
</comment>
<comment type="PTM">
    <molecule>Polyprotein P123</molecule>
    <text evidence="2">Specific enzymatic cleavages in vivo yield mature proteins (By similarity). The processing of the polyprotein is temporally regulated (By similarity). In early stages (1.7 hpi), P123 is cleaved at the nsP1/nsP2 site with low efficiency (By similarity). After replication of the viral minus-strand RNAs (4 hpi), the polyproteins are cut at the nsP1/nsP2 and nsP2/nsP3 sites very efficiently, preventing accumulation of P123 and allowing the formation of the late replication complex (By similarity).</text>
</comment>
<comment type="PTM">
    <molecule>Polyprotein P123'</molecule>
    <text evidence="2">Specific enzymatic cleavages in vivo yield mature proteins (By similarity). The processing of the polyprotein is temporally regulated (By similarity). In early stages (1.7 hpi), P123' is cleaved at the nsP1/nsP2 site with low efficiency (By similarity). After replication of the viral minus-strand RNAs (4 hpi), the polyproteins are cut at the nsP1/nsP2 and nsP2/nsP3 sites very efficiently, preventing accumulation of P123' and allowing the formation of the late replication complex (By similarity).</text>
</comment>
<comment type="PTM">
    <molecule>mRNA-capping enzyme nsP1</molecule>
    <text evidence="2">Palmitoylated by host palmitoyltransferases ZDHHC2 and ZDHHC19.</text>
</comment>
<comment type="PTM">
    <molecule>Non-structural protein 3</molecule>
    <text evidence="3">Phosphorylated by host on serines and threonines.</text>
</comment>
<comment type="PTM">
    <molecule>Non-structural protein 3'</molecule>
    <text evidence="3">Phosphorylated by host on serines and threonines.</text>
</comment>
<comment type="PTM">
    <molecule>RNA-directed RNA polymerase nsP4</molecule>
    <text evidence="2">Ubiquitinated; targets the protein for rapid degradation via the ubiquitin system (By similarity). Nsp4 is present in extremely low quantities due to low frequency of translation through the amber stop-codon and the degradation by the ubiquitin pathway (By similarity).</text>
</comment>
<comment type="miscellaneous">
    <text evidence="2">Viral replication produces dsRNA in the late phase of infection, resulting in a strong activation of host EIF2AK2/PKR, leading to almost complete phosphorylation of EIF2A (By similarity). This inactivates completely cellular translation initiation, resulting shutoff of host proteins synthesis (By similarity). However, phosphorylation of EIF2A is probably not the only mechanism responsible for the host translation shutoff (By similarity). The viral translation can still occur normally because it relies on a hairpin structure in the coding region of sgRNA and is EIF2A-, EIF2D-, EIF4G- EIF4A-independent (By similarity).</text>
</comment>
<comment type="miscellaneous">
    <text evidence="1 2">The genome codes for P123, but readthrough of a terminator codon UGA occurs between the codons for Gln-1883 and Arg-1885 giving rise to P1234. P1234 is cleaved quickly by nsP2 into P123' and nsP4 (By similarity). Further processing of p123' gives nsP1, nsP2 and nsP3' which is 6 amino acids longer than nsP3 since the cleavage site is after the readthrough (By similarity). This unusual molecular mechanism ensures that few nsP4 are produced compared to other non-structural proteins (By similarity). Mutant viruses with no alternative termination site grow significantly slower than wild-type virus (By similarity). The opal termination codon is frequently mutated to a sense codon on passage in cell culture (By similarity). The presence of the opal codon may be a requirement for viral maintenance in both vertebrate and invertebrate hosts and a selective advantage may be conferred in cell culture for the sense codon (By similarity).</text>
</comment>
<evidence type="ECO:0000250" key="1">
    <source>
        <dbReference type="UniProtKB" id="O90368"/>
    </source>
</evidence>
<evidence type="ECO:0000250" key="2">
    <source>
        <dbReference type="UniProtKB" id="P03317"/>
    </source>
</evidence>
<evidence type="ECO:0000250" key="3">
    <source>
        <dbReference type="UniProtKB" id="P08411"/>
    </source>
</evidence>
<evidence type="ECO:0000250" key="4">
    <source>
        <dbReference type="UniProtKB" id="P27282"/>
    </source>
</evidence>
<evidence type="ECO:0000250" key="5">
    <source>
        <dbReference type="UniProtKB" id="P36328"/>
    </source>
</evidence>
<evidence type="ECO:0000250" key="6">
    <source>
        <dbReference type="UniProtKB" id="Q8JUX6"/>
    </source>
</evidence>
<evidence type="ECO:0000255" key="7">
    <source>
        <dbReference type="PROSITE-ProRule" id="PRU00490"/>
    </source>
</evidence>
<evidence type="ECO:0000255" key="8">
    <source>
        <dbReference type="PROSITE-ProRule" id="PRU00539"/>
    </source>
</evidence>
<evidence type="ECO:0000255" key="9">
    <source>
        <dbReference type="PROSITE-ProRule" id="PRU00853"/>
    </source>
</evidence>
<evidence type="ECO:0000255" key="10">
    <source>
        <dbReference type="PROSITE-ProRule" id="PRU00990"/>
    </source>
</evidence>
<evidence type="ECO:0000255" key="11">
    <source>
        <dbReference type="PROSITE-ProRule" id="PRU01079"/>
    </source>
</evidence>
<evidence type="ECO:0000256" key="12">
    <source>
        <dbReference type="SAM" id="MobiDB-lite"/>
    </source>
</evidence>
<evidence type="ECO:0000305" key="13"/>
<feature type="chain" id="PRO_0000308388" description="Polyprotein P1234">
    <location>
        <begin position="1"/>
        <end position="2497"/>
    </location>
</feature>
<feature type="chain" id="PRO_0000232102" description="Polyprotein P123'">
    <location>
        <begin position="1"/>
        <end position="1890"/>
    </location>
</feature>
<feature type="chain" id="PRO_0000232103" description="Polyprotein P123">
    <location>
        <begin position="1"/>
        <end position="1883"/>
    </location>
</feature>
<feature type="chain" id="PRO_0000232104" description="mRNA-capping enzyme nsP1">
    <location>
        <begin position="1"/>
        <end position="535"/>
    </location>
</feature>
<feature type="chain" id="PRO_0000232105" description="Protease nsP2">
    <location>
        <begin position="536"/>
        <end position="1329"/>
    </location>
</feature>
<feature type="chain" id="PRO_0000232106" description="Non-structural protein 3'">
    <location>
        <begin position="1330"/>
        <end position="1890"/>
    </location>
</feature>
<feature type="chain" id="PRO_0000232107" description="Non-structural protein 3">
    <location>
        <begin position="1330"/>
        <end position="1883"/>
    </location>
</feature>
<feature type="chain" id="PRO_0000232108" description="RNA-directed RNA polymerase nsP4">
    <location>
        <begin position="1891"/>
        <end position="2497"/>
    </location>
</feature>
<feature type="domain" description="Alphavirus-like MT" evidence="11">
    <location>
        <begin position="28"/>
        <end position="259"/>
    </location>
</feature>
<feature type="domain" description="(+)RNA virus helicase ATP-binding" evidence="10">
    <location>
        <begin position="690"/>
        <end position="841"/>
    </location>
</feature>
<feature type="domain" description="(+)RNA virus helicase C-terminal" evidence="10">
    <location>
        <begin position="842"/>
        <end position="990"/>
    </location>
</feature>
<feature type="domain" description="Peptidase C9" evidence="9">
    <location>
        <begin position="1003"/>
        <end position="1322"/>
    </location>
</feature>
<feature type="domain" description="Macro" evidence="7">
    <location>
        <begin position="1328"/>
        <end position="1489"/>
    </location>
</feature>
<feature type="domain" description="RdRp catalytic" evidence="8">
    <location>
        <begin position="2254"/>
        <end position="2369"/>
    </location>
</feature>
<feature type="region of interest" description="NsP1 membrane-binding" evidence="3">
    <location>
        <begin position="244"/>
        <end position="263"/>
    </location>
</feature>
<feature type="region of interest" description="Nucleolus localization signal" evidence="3">
    <location>
        <begin position="1004"/>
        <end position="1023"/>
    </location>
</feature>
<feature type="region of interest" description="Disordered" evidence="12">
    <location>
        <begin position="1774"/>
        <end position="1806"/>
    </location>
</feature>
<feature type="region of interest" description="Disordered" evidence="12">
    <location>
        <begin position="1827"/>
        <end position="1865"/>
    </location>
</feature>
<feature type="region of interest" description="Binding to host FXR family members" evidence="4">
    <location>
        <begin position="1856"/>
        <end position="1877"/>
    </location>
</feature>
<feature type="short sequence motif" description="Nuclear export signal" evidence="4">
    <location>
        <begin position="1056"/>
        <end position="1065"/>
    </location>
</feature>
<feature type="short sequence motif" description="Nuclear localization signal" evidence="4">
    <location>
        <begin position="1179"/>
        <end position="1183"/>
    </location>
</feature>
<feature type="active site" description="For cysteine protease nsP2 activity" evidence="9">
    <location>
        <position position="1012"/>
    </location>
</feature>
<feature type="active site" description="For cysteine protease nsP2 activity" evidence="9">
    <location>
        <position position="1081"/>
    </location>
</feature>
<feature type="binding site" evidence="10">
    <location>
        <begin position="721"/>
        <end position="728"/>
    </location>
    <ligand>
        <name>a ribonucleoside 5'-triphosphate</name>
        <dbReference type="ChEBI" id="CHEBI:61557"/>
    </ligand>
</feature>
<feature type="binding site" evidence="5">
    <location>
        <position position="1339"/>
    </location>
    <ligand>
        <name>ADP-D-ribose</name>
        <dbReference type="ChEBI" id="CHEBI:57967"/>
    </ligand>
</feature>
<feature type="binding site" evidence="6">
    <location>
        <position position="1353"/>
    </location>
    <ligand>
        <name>ADP-D-ribose</name>
        <dbReference type="ChEBI" id="CHEBI:57967"/>
    </ligand>
</feature>
<feature type="binding site" evidence="6">
    <location>
        <position position="1361"/>
    </location>
    <ligand>
        <name>ADP-D-ribose</name>
        <dbReference type="ChEBI" id="CHEBI:57967"/>
    </ligand>
</feature>
<feature type="binding site" evidence="5">
    <location>
        <position position="1441"/>
    </location>
    <ligand>
        <name>ADP-D-ribose</name>
        <dbReference type="ChEBI" id="CHEBI:57967"/>
    </ligand>
</feature>
<feature type="binding site" evidence="5">
    <location>
        <position position="1442"/>
    </location>
    <ligand>
        <name>ADP-D-ribose</name>
        <dbReference type="ChEBI" id="CHEBI:57967"/>
    </ligand>
</feature>
<feature type="binding site" evidence="5">
    <location>
        <position position="1443"/>
    </location>
    <ligand>
        <name>ADP-D-ribose</name>
        <dbReference type="ChEBI" id="CHEBI:57967"/>
    </ligand>
</feature>
<feature type="binding site" evidence="2">
    <location>
        <position position="1596"/>
    </location>
    <ligand>
        <name>Zn(2+)</name>
        <dbReference type="ChEBI" id="CHEBI:29105"/>
    </ligand>
</feature>
<feature type="binding site" evidence="2">
    <location>
        <position position="1598"/>
    </location>
    <ligand>
        <name>Zn(2+)</name>
        <dbReference type="ChEBI" id="CHEBI:29105"/>
    </ligand>
</feature>
<feature type="binding site" evidence="2">
    <location>
        <position position="1621"/>
    </location>
    <ligand>
        <name>Zn(2+)</name>
        <dbReference type="ChEBI" id="CHEBI:29105"/>
    </ligand>
</feature>
<feature type="binding site" evidence="2">
    <location>
        <position position="1639"/>
    </location>
    <ligand>
        <name>Zn(2+)</name>
        <dbReference type="ChEBI" id="CHEBI:29105"/>
    </ligand>
</feature>
<feature type="site" description="Involved in the phosphoramide link with 7-methyl-GMP" evidence="4">
    <location>
        <position position="37"/>
    </location>
</feature>
<feature type="site" description="Cleavage; by protease nsP2" evidence="2">
    <location>
        <begin position="535"/>
        <end position="536"/>
    </location>
</feature>
<feature type="site" description="Cleavage; by protease nsP2" evidence="2">
    <location>
        <begin position="1329"/>
        <end position="1330"/>
    </location>
</feature>
<feature type="site" description="Cleavage; by protease nsP2" evidence="6">
    <location>
        <begin position="1890"/>
        <end position="1891"/>
    </location>
</feature>
<feature type="lipid moiety-binding region" description="S-palmitoyl cysteine; by host" evidence="6">
    <location>
        <position position="419"/>
    </location>
</feature>
<feature type="sequence variant" description="In strain: MX01-22.">
    <original>N</original>
    <variation>T</variation>
    <location>
        <position position="167"/>
    </location>
</feature>
<feature type="sequence variant" description="In strain: CPA152, MX01-22, OAX131 and OAX142.">
    <original>I</original>
    <variation>V</variation>
    <location>
        <position position="487"/>
    </location>
</feature>
<feature type="sequence variant" description="In strain: CPA152, MX01-22, OAX131 and OAX142.">
    <original>K</original>
    <variation>Q</variation>
    <location>
        <position position="1095"/>
    </location>
</feature>
<feature type="sequence variant" description="In strain: MX01-22.">
    <original>S</original>
    <variation>P</variation>
    <location>
        <position position="1664"/>
    </location>
</feature>
<feature type="sequence variant" description="In strain: CPA152, MX01-22, OAX131 and OAX142.">
    <original>L</original>
    <variation>S</variation>
    <location>
        <position position="1672"/>
    </location>
</feature>
<feature type="sequence variant" description="In strain: CPA152, OAX131, OAX142 and MX01-22.">
    <original>A</original>
    <variation>DT</variation>
    <location>
        <position position="1704"/>
    </location>
</feature>
<feature type="sequence variant" description="In strain: OAX131.">
    <original>V</original>
    <variation>E</variation>
    <location>
        <position position="1708"/>
    </location>
</feature>
<feature type="sequence variant" description="In strain: OAX131.">
    <original>M</original>
    <variation>R</variation>
    <location>
        <position position="1821"/>
    </location>
</feature>
<protein>
    <recommendedName>
        <fullName>Polyprotein P1234</fullName>
        <shortName>P1234</shortName>
    </recommendedName>
    <alternativeName>
        <fullName>Non-structural polyprotein</fullName>
    </alternativeName>
    <component>
        <recommendedName>
            <fullName>Polyprotein P123'</fullName>
            <shortName>P123'</shortName>
        </recommendedName>
    </component>
    <component>
        <recommendedName>
            <fullName>Polyprotein P123</fullName>
            <shortName>P123</shortName>
        </recommendedName>
    </component>
    <component>
        <recommendedName>
            <fullName>mRNA-capping enzyme nsP1</fullName>
            <ecNumber evidence="5">2.1.1.-</ecNumber>
            <ecNumber evidence="5">2.7.7.-</ecNumber>
        </recommendedName>
        <alternativeName>
            <fullName>Non-structural protein 1</fullName>
        </alternativeName>
    </component>
    <component>
        <recommendedName>
            <fullName>Protease nsP2</fullName>
            <ecNumber evidence="4">3.4.22.-</ecNumber>
            <ecNumber evidence="6">3.6.1.15</ecNumber>
            <ecNumber evidence="3">3.6.1.74</ecNumber>
            <ecNumber evidence="6">3.6.4.13</ecNumber>
        </recommendedName>
        <alternativeName>
            <fullName>Non-structural protein 2</fullName>
            <shortName>nsP2</shortName>
        </alternativeName>
    </component>
    <component>
        <recommendedName>
            <fullName>Non-structural protein 3'</fullName>
            <shortName>nsP3'</shortName>
            <ecNumber evidence="4">3.1.3.84</ecNumber>
        </recommendedName>
    </component>
    <component>
        <recommendedName>
            <fullName>Non-structural protein 3</fullName>
            <shortName>nsP3</shortName>
            <ecNumber evidence="4">3.1.3.84</ecNumber>
        </recommendedName>
    </component>
    <component>
        <recommendedName>
            <fullName>RNA-directed RNA polymerase nsP4</fullName>
            <ecNumber evidence="2">2.7.7.19</ecNumber>
            <ecNumber evidence="8">2.7.7.48</ecNumber>
        </recommendedName>
        <alternativeName>
            <fullName>Non-structural protein 4</fullName>
            <shortName>nsP4</shortName>
        </alternativeName>
    </component>
</protein>
<reference key="1">
    <citation type="journal article" date="2002" name="J. Virol.">
        <title>Positively charged amino acid substitutions in the e2 envelope glycoprotein are associated with the emergence of venezuelan equine encephalitis virus.</title>
        <authorList>
            <person name="Brault A.C."/>
            <person name="Powers A.M."/>
            <person name="Holmes E.C."/>
            <person name="Woelk C.H."/>
            <person name="Weaver S.C."/>
        </authorList>
    </citation>
    <scope>NUCLEOTIDE SEQUENCE [GENOMIC RNA]</scope>
    <source>
        <strain>CPA152</strain>
        <strain>CPA201</strain>
        <strain>OAX131</strain>
        <strain>OAX142</strain>
    </source>
</reference>
<reference key="2">
    <citation type="submission" date="2004-11" db="EMBL/GenBank/DDBJ databases">
        <title>Venezuelan equine encephalitis virus from Southern Mexico.</title>
        <authorList>
            <person name="Weaver S.C."/>
        </authorList>
    </citation>
    <scope>NUCLEOTIDE SEQUENCE [GENOMIC RNA]</scope>
    <source>
        <strain>MX01-22</strain>
    </source>
</reference>
<proteinExistence type="inferred from homology"/>